<accession>P13334</accession>
<accession>Q9T0U2</accession>
<organism>
    <name type="scientific">Enterobacteria phage T4</name>
    <name type="common">Bacteriophage T4</name>
    <dbReference type="NCBI Taxonomy" id="10665"/>
    <lineage>
        <taxon>Viruses</taxon>
        <taxon>Duplodnaviria</taxon>
        <taxon>Heunggongvirae</taxon>
        <taxon>Uroviricota</taxon>
        <taxon>Caudoviricetes</taxon>
        <taxon>Straboviridae</taxon>
        <taxon>Tevenvirinae</taxon>
        <taxon>Tequatrovirus</taxon>
    </lineage>
</organism>
<organismHost>
    <name type="scientific">Escherichia coli</name>
    <dbReference type="NCBI Taxonomy" id="562"/>
</organismHost>
<evidence type="ECO:0000255" key="1"/>
<evidence type="ECO:0000255" key="2">
    <source>
        <dbReference type="HAMAP-Rule" id="MF_04114"/>
    </source>
</evidence>
<evidence type="ECO:0000256" key="3">
    <source>
        <dbReference type="SAM" id="MobiDB-lite"/>
    </source>
</evidence>
<evidence type="ECO:0000269" key="4">
    <source>
    </source>
</evidence>
<evidence type="ECO:0000269" key="5">
    <source>
    </source>
</evidence>
<evidence type="ECO:0000269" key="6">
    <source>
    </source>
</evidence>
<evidence type="ECO:0000269" key="7">
    <source>
    </source>
</evidence>
<evidence type="ECO:0000269" key="8">
    <source>
    </source>
</evidence>
<evidence type="ECO:0000269" key="9">
    <source>
    </source>
</evidence>
<evidence type="ECO:0000269" key="10">
    <source>
    </source>
</evidence>
<evidence type="ECO:0000269" key="11">
    <source>
    </source>
</evidence>
<evidence type="ECO:0000305" key="12"/>
<dbReference type="EMBL" id="X16055">
    <property type="protein sequence ID" value="CAA34190.1"/>
    <property type="molecule type" value="Genomic_DNA"/>
</dbReference>
<dbReference type="EMBL" id="AF158101">
    <property type="protein sequence ID" value="AAD42425.1"/>
    <property type="molecule type" value="Genomic_DNA"/>
</dbReference>
<dbReference type="EMBL" id="M19085">
    <property type="protein sequence ID" value="AAA32543.1"/>
    <property type="molecule type" value="Genomic_DNA"/>
</dbReference>
<dbReference type="PIR" id="JU0161">
    <property type="entry name" value="VHBP20"/>
</dbReference>
<dbReference type="RefSeq" id="NP_049782.1">
    <property type="nucleotide sequence ID" value="NC_000866.4"/>
</dbReference>
<dbReference type="PDB" id="3JA7">
    <property type="method" value="EM"/>
    <property type="resolution" value="3.63 A"/>
    <property type="chains" value="A/B/C/D/E/F/G/H/I/J/K/L=74-524"/>
</dbReference>
<dbReference type="PDB" id="6UZC">
    <property type="method" value="EM"/>
    <property type="resolution" value="4.50 A"/>
    <property type="chains" value="E/F/G/H/I/J/K/L/M/N/O/P=1-524"/>
</dbReference>
<dbReference type="PDBsum" id="3JA7"/>
<dbReference type="PDBsum" id="6UZC"/>
<dbReference type="EMDB" id="EMD-20956"/>
<dbReference type="EMDB" id="EMD-6324"/>
<dbReference type="SMR" id="P13334"/>
<dbReference type="TCDB" id="1.W.8.1.1">
    <property type="family name" value="the (enterobacterial phage t4) portal protein 8 (ppp8) family"/>
</dbReference>
<dbReference type="GeneID" id="1258582"/>
<dbReference type="KEGG" id="vg:1258582"/>
<dbReference type="OrthoDB" id="2332at10239"/>
<dbReference type="EvolutionaryTrace" id="P13334"/>
<dbReference type="Proteomes" id="UP000009087">
    <property type="component" value="Segment"/>
</dbReference>
<dbReference type="GO" id="GO:0020002">
    <property type="term" value="C:host cell plasma membrane"/>
    <property type="evidence" value="ECO:0000314"/>
    <property type="project" value="CACAO"/>
</dbReference>
<dbReference type="GO" id="GO:0016020">
    <property type="term" value="C:membrane"/>
    <property type="evidence" value="ECO:0007669"/>
    <property type="project" value="UniProtKB-KW"/>
</dbReference>
<dbReference type="GO" id="GO:0046798">
    <property type="term" value="C:viral portal complex"/>
    <property type="evidence" value="ECO:0000314"/>
    <property type="project" value="CACAO"/>
</dbReference>
<dbReference type="GO" id="GO:0099000">
    <property type="term" value="P:symbiont genome ejection through host cell envelope, contractile tail mechanism"/>
    <property type="evidence" value="ECO:0007669"/>
    <property type="project" value="UniProtKB-UniRule"/>
</dbReference>
<dbReference type="GO" id="GO:0019072">
    <property type="term" value="P:viral genome packaging"/>
    <property type="evidence" value="ECO:0007669"/>
    <property type="project" value="UniProtKB-UniRule"/>
</dbReference>
<dbReference type="GO" id="GO:0019076">
    <property type="term" value="P:viral release from host cell"/>
    <property type="evidence" value="ECO:0007669"/>
    <property type="project" value="UniProtKB-UniRule"/>
</dbReference>
<dbReference type="HAMAP" id="MF_04114">
    <property type="entry name" value="PORTAL_T4"/>
    <property type="match status" value="1"/>
</dbReference>
<dbReference type="InterPro" id="IPR010823">
    <property type="entry name" value="Portal_Gp20"/>
</dbReference>
<dbReference type="Pfam" id="PF07230">
    <property type="entry name" value="Portal_T4"/>
    <property type="match status" value="1"/>
</dbReference>
<proteinExistence type="evidence at protein level"/>
<sequence length="524" mass="61032">MKFNVLSLFAPWAKMDERNFKDQEKEDLVSITAPKLDDGAREFEVSSNEAASPYNAAFQTIFGSYEPGMKTTRELIDTYRNLMNNYEVDNAVSEIVSDAIVYEDDTEVVALNLDKSKFSPKIKNMMLDEFSDVLNHLSFQRKGSDHFRRWYVDSRIFFHKIIDPKRPKEGIKELRRLDPRQVQYVREIITETEAGTKIVKGYKEYFIYDTAHESYACDGRMYEAGTKIKIPKAAVVYAHSGLVDCCGKNIIGYLHRAVKPANQLKLLEDAVVIYRITRAPDRRVWYVDTGNMPARKAAEHMQHVMNTMKNRVVYDASTGKIKNQQHNMSMTEDYWLQRRDGKAVTEVDTLPGADNTGNMEDIRWFRQALYMALRVPLSRIPQDQQGGVMFDSGTSITRDELTFAKFIRELQHKFEEVFLDPLKTNLLLKGIITEDEWNDEINNIKIEFHRDSYFAELKEAEILERRINMLTMAEPFIGKYISHRTAMKDILQMTDEEIEQEAKQIEEESKEARFQDPDQEQEDF</sequence>
<feature type="chain" id="PRO_0000165010" description="Portal protein">
    <location>
        <begin position="1"/>
        <end position="524"/>
    </location>
</feature>
<feature type="region of interest" description="Disordered" evidence="3">
    <location>
        <begin position="500"/>
        <end position="524"/>
    </location>
</feature>
<feature type="coiled-coil region" evidence="1">
    <location>
        <begin position="486"/>
        <end position="516"/>
    </location>
</feature>
<feature type="compositionally biased region" description="Basic and acidic residues" evidence="3">
    <location>
        <begin position="500"/>
        <end position="516"/>
    </location>
</feature>
<feature type="sequence conflict" description="In Ref. 1; CAA34190." evidence="12" ref="1">
    <original>M</original>
    <variation>I</variation>
    <location>
        <position position="125"/>
    </location>
</feature>
<feature type="sequence conflict" description="In Ref. 1; CAA34190." evidence="12" ref="1">
    <original>R</original>
    <variation>Q</variation>
    <location>
        <position position="141"/>
    </location>
</feature>
<gene>
    <name type="primary">20</name>
</gene>
<comment type="function">
    <text evidence="2 6 7 8 10">Forms the portal vertex of the capsid (PubMed:24126213, PubMed:2685327). This portal plays critical roles in head assembly, genome packaging, neck/tail attachment, and genome ejection. The portal protein multimerizes as a single ring-shaped homododecamer arranged around a central channel. Binds to the terminase subunits to form the packaging machine. Attaches to the host inner membrane most likely through interaction with host yidC and forms together with chaperone gp40 an initiator complex to form the prohead.</text>
</comment>
<comment type="subunit">
    <text evidence="2 4 9 11">Homododecamer. Interacts with the large terminase subunit. Interacts with the major capsid protein. Interacts with the capsid vertex protein.</text>
</comment>
<comment type="subcellular location">
    <subcellularLocation>
        <location evidence="2 5">Virion</location>
    </subcellularLocation>
    <subcellularLocation>
        <location evidence="7">Host cell inner membrane</location>
    </subcellularLocation>
    <text evidence="2 7">Located at a unique 5-fold vertex of the icosahedral capsid. Localization at the inner host membrane is likely due to interactions with host membrane proteins such as yidC.</text>
</comment>
<comment type="similarity">
    <text evidence="2 12">Belongs to the Tevenvirinae portal protein family.</text>
</comment>
<keyword id="KW-0002">3D-structure</keyword>
<keyword id="KW-0167">Capsid protein</keyword>
<keyword id="KW-0175">Coiled coil</keyword>
<keyword id="KW-1030">Host cell inner membrane</keyword>
<keyword id="KW-1032">Host cell membrane</keyword>
<keyword id="KW-1043">Host membrane</keyword>
<keyword id="KW-0472">Membrane</keyword>
<keyword id="KW-1185">Reference proteome</keyword>
<keyword id="KW-0118">Viral capsid assembly</keyword>
<keyword id="KW-1242">Viral contractile tail ejection system</keyword>
<keyword id="KW-1171">Viral genome ejection through host cell envelope</keyword>
<keyword id="KW-0231">Viral genome packaging</keyword>
<keyword id="KW-1162">Viral penetration into host cytoplasm</keyword>
<keyword id="KW-1188">Viral release from host cell</keyword>
<keyword id="KW-0946">Virion</keyword>
<keyword id="KW-1160">Virus entry into host cell</keyword>
<name>PORTL_BPT4</name>
<reference key="1">
    <citation type="journal article" date="1989" name="Nucleic Acids Res.">
        <title>Nucleotide and deduced amino acid sequences of bacteriophage T4 gene 20.</title>
        <authorList>
            <person name="Marusich E.I."/>
            <person name="Mesyanzhinov V.V."/>
        </authorList>
    </citation>
    <scope>NUCLEOTIDE SEQUENCE [GENOMIC DNA]</scope>
    <source>
        <strain>D</strain>
    </source>
</reference>
<reference key="2">
    <citation type="journal article" date="2003" name="Microbiol. Mol. Biol. Rev.">
        <title>Bacteriophage T4 genome.</title>
        <authorList>
            <person name="Miller E.S."/>
            <person name="Kutter E."/>
            <person name="Mosig G."/>
            <person name="Arisaka F."/>
            <person name="Kunisawa T."/>
            <person name="Ruger W."/>
        </authorList>
    </citation>
    <scope>NUCLEOTIDE SEQUENCE [LARGE SCALE GENOMIC DNA]</scope>
</reference>
<reference key="3">
    <citation type="journal article" date="1988" name="J. Virol.">
        <title>Nucleotide sequence of the tail tube structural gene of bacteriophage T4.</title>
        <authorList>
            <person name="Arisaka F."/>
            <person name="Ishimoto L."/>
            <person name="Kassavetis G."/>
            <person name="Kumazaki T."/>
            <person name="Ishii S."/>
        </authorList>
    </citation>
    <scope>NUCLEOTIDE SEQUENCE [GENOMIC DNA] OF 1-27</scope>
</reference>
<reference key="4">
    <citation type="journal article" date="1983" name="J. Mol. Biol.">
        <title>Gene 20 product of bacteriophage T4. II. Its structural organization in prehead and bacteriophage.</title>
        <authorList>
            <person name="Driedonks R.A."/>
            <person name="Caldentey J."/>
        </authorList>
    </citation>
    <scope>INTERACTION WITH THE MAJOR CAPSID PROTEIN</scope>
    <scope>INTERACTION WITH THE CAPSID VERTEX PROTEIN</scope>
</reference>
<reference key="5">
    <citation type="journal article" date="1989" name="J. Mol. Biol.">
        <title>Membrane-associated assembly of a phage T4 DNA entrance vertex structure studied with expression vectors.</title>
        <authorList>
            <person name="Michaud G."/>
            <person name="Zachary A."/>
            <person name="Rao V.B."/>
            <person name="Black L.W."/>
        </authorList>
    </citation>
    <scope>FUNCTION</scope>
</reference>
<reference key="6">
    <citation type="journal article" date="1999" name="J. Mol. Biol.">
        <title>Analysis of capsid portal protein and terminase functional domains: interaction sites required for DNA packaging in bacteriophage T4.</title>
        <authorList>
            <person name="Lin H."/>
            <person name="Rao V.B."/>
            <person name="Black L.W."/>
        </authorList>
    </citation>
    <scope>INTERACTION WITH THE LARGE TERMINASE SUBUNIT</scope>
    <scope>SUBUNIT</scope>
</reference>
<reference key="7">
    <citation type="journal article" date="2010" name="Virol. J.">
        <title>Structure and assembly of bacteriophage T4 head.</title>
        <authorList>
            <person name="Rao V.B."/>
            <person name="Black L.W."/>
        </authorList>
    </citation>
    <scope>REVIEW</scope>
</reference>
<reference key="8">
    <citation type="journal article" date="2012" name="J. Virol.">
        <title>Membrane interaction of the portal protein gp20 of bacteriophage T4.</title>
        <authorList>
            <person name="Quinten T.A."/>
            <person name="Kuhn A."/>
        </authorList>
    </citation>
    <scope>FUNCTION</scope>
    <scope>SUBCELLULAR LOCATION</scope>
</reference>
<reference key="9">
    <citation type="journal article" date="2014" name="J. Mol. Biol.">
        <title>Structure-function analysis of the DNA translocating portal of the bacteriophage T4 packaging machine.</title>
        <authorList>
            <person name="Padilla-Sanchez V."/>
            <person name="Gao S."/>
            <person name="Kim H.R."/>
            <person name="Kihara D."/>
            <person name="Sun L."/>
            <person name="Rossmann M.G."/>
            <person name="Rao V.B."/>
        </authorList>
    </citation>
    <scope>FUNCTION</scope>
</reference>
<reference key="10">
    <citation type="journal article" date="2001" name="Virology">
        <title>The structure of isometric capsids of bacteriophage T4.</title>
        <authorList>
            <person name="Olson N.H."/>
            <person name="Gingery M."/>
            <person name="Eiserling F.A."/>
            <person name="Baker T.S."/>
        </authorList>
    </citation>
    <scope>STRUCTURE BY ELECTRON MICROSCOPY (15.0 ANGSTROMS)</scope>
    <scope>SUBCELLULAR LOCATION</scope>
</reference>
<reference key="11">
    <citation type="journal article" date="2004" name="Proc. Natl. Acad. Sci. U.S.A.">
        <title>Molecular architecture of the prolate head of bacteriophage T4.</title>
        <authorList>
            <person name="Fokine A."/>
            <person name="Chipman P.R."/>
            <person name="Leiman P.G."/>
            <person name="Mesyanzhinov V.V."/>
            <person name="Rao V.B."/>
            <person name="Rossmann M.G."/>
        </authorList>
    </citation>
    <scope>STRUCTURE BY ELECTRON MICROSCOPY (22.0 ANGSTROMS)</scope>
    <scope>FUNCTION</scope>
</reference>
<reference key="12">
    <citation type="journal article" date="2015" name="Nat. Commun.">
        <title>Cryo-EM structure of the bacteriophage T4 portal protein assembly at near-atomic resolution.</title>
        <authorList>
            <person name="Sun L."/>
            <person name="Zhang X."/>
            <person name="Gao S."/>
            <person name="Rao P.A."/>
            <person name="Padilla-Sanchez V."/>
            <person name="Chen Z."/>
            <person name="Sun S."/>
            <person name="Xiang Y."/>
            <person name="Subramaniam S."/>
            <person name="Rao V.B."/>
            <person name="Rossmann M.G."/>
        </authorList>
    </citation>
    <scope>STRUCTURE BY ELECTRON MICROSCOPY (3.6 ANGSTROMS)</scope>
    <scope>INTERACTION WITH THE LARGE TERMINASE SUBUNIT</scope>
</reference>
<protein>
    <recommendedName>
        <fullName evidence="2">Portal protein</fullName>
    </recommendedName>
    <alternativeName>
        <fullName>Gene product 20</fullName>
    </alternativeName>
    <alternativeName>
        <fullName evidence="2">gp20</fullName>
    </alternativeName>
</protein>